<dbReference type="EMBL" id="EF589101">
    <property type="protein sequence ID" value="ABV01042.1"/>
    <property type="molecule type" value="Genomic_RNA"/>
</dbReference>
<dbReference type="RefSeq" id="YP_001837097.1">
    <property type="nucleotide sequence ID" value="NC_010587.1"/>
</dbReference>
<dbReference type="KEGG" id="vg:6218802"/>
<dbReference type="Proteomes" id="UP000001674">
    <property type="component" value="Genome"/>
</dbReference>
<dbReference type="GO" id="GO:0003723">
    <property type="term" value="F:RNA binding"/>
    <property type="evidence" value="ECO:0007669"/>
    <property type="project" value="UniProtKB-KW"/>
</dbReference>
<protein>
    <recommendedName>
        <fullName>Non-structural protein 1</fullName>
        <shortName>NS1</shortName>
    </recommendedName>
    <alternativeName>
        <fullName>NS73</fullName>
    </alternativeName>
</protein>
<evidence type="ECO:0000250" key="1"/>
<evidence type="ECO:0000256" key="2">
    <source>
        <dbReference type="SAM" id="MobiDB-lite"/>
    </source>
</evidence>
<evidence type="ECO:0000305" key="3"/>
<sequence>MSRRFRLGDIRSTGVAEYASTPVRADASPTTNPPPTAAPASLTSTDSHTMAPPNQLTFDLSGVIFTGSPPAWLLQYRGFEKHMVTMLMLKSGVRTYPRFDDFISALVSTMALMGIVPQTSLTDGEVILMRYANAETLPEPEETTRQWGDSPEAELANEGYGNDEIDNTPQLQAPLISGPPQTYAAAAAPPSLQQSTVPLISATPSPALSRSSSVASLTSIPACSPAPSSLPSILTMQTRPPSPSSKSHQPRVTLPERRPTRRPEHIANDEDYNRSRAGYAQGKPSHSPMYGSGRESHFEEAFFAAYPHSVDGRWHKFSASIVVLADPNEDPALLTLHSLEREEGAQETYIMRTSAAFAVARVRVMRLRPTMSVHDVHDMLAGHPVVSITGRACAYMVRHKLTDGVFSKQFRRIVMGIDPVMIRHGTQALSLFAILTDHRLDHAHTHAAMSLRLAMQFVESPLYDAQRSWLKAHAPATIHCAATSDSNADSTLSAIYRSDSTPRDQPTPGDSTISQLTASNQELQIQITALTTTNNIQARAIAELKACVRPHSTDTHHALSKYALAHTCINTQELPLLTSLLGEDTATAIQTARERAKDIAKRTLTERVAEPLRVMNASLEAELTHERAHSSELRATLAILETDLNTAARERDAHAHMITSLQSEITELRQERLTVITSERTDVALLEQRVTDAERHAVAQHQSLPLLYGSVSLELPPSPTEDELLTSVAPADLWD</sequence>
<reference key="1">
    <citation type="journal article" date="2008" name="Virology">
        <title>Complete characterisation of the American grass carp reovirus genome (genus Aquareovirus: family Reoviridae) reveals an evolutionary link between aquareoviruses and coltiviruses.</title>
        <authorList>
            <person name="Mohd Jaafar F."/>
            <person name="Goodwin A.E."/>
            <person name="Belhouchet M."/>
            <person name="Merry G."/>
            <person name="Fang Q."/>
            <person name="Cantaloube J.F."/>
            <person name="Biagini P."/>
            <person name="de Micco P."/>
            <person name="Mertens P.P."/>
            <person name="Attoui H."/>
        </authorList>
    </citation>
    <scope>NUCLEOTIDE SEQUENCE [GENOMIC RNA]</scope>
</reference>
<organismHost>
    <name type="scientific">Ctenopharyngodon idella</name>
    <name type="common">Grass carp</name>
    <name type="synonym">Leuciscus idella</name>
    <dbReference type="NCBI Taxonomy" id="7959"/>
</organismHost>
<organism>
    <name type="scientific">Aquareovirus G (isolate American grass carp/USA/PB01-155/-)</name>
    <name type="common">AQRV-G</name>
    <dbReference type="NCBI Taxonomy" id="648234"/>
    <lineage>
        <taxon>Viruses</taxon>
        <taxon>Riboviria</taxon>
        <taxon>Orthornavirae</taxon>
        <taxon>Duplornaviricota</taxon>
        <taxon>Resentoviricetes</taxon>
        <taxon>Reovirales</taxon>
        <taxon>Spinareoviridae</taxon>
        <taxon>Aquareovirus</taxon>
        <taxon>Aquareovirus graminis</taxon>
    </lineage>
</organism>
<proteinExistence type="inferred from homology"/>
<gene>
    <name type="primary">S4</name>
</gene>
<name>VNS1_AQRVG</name>
<comment type="function">
    <text evidence="1">Non-structural protein with ssRNA-binding activity. Is probably involved in the formation of viral inclusions, where the assembly of cores and the replication of viral RNA are thought to occur (By similarity).</text>
</comment>
<comment type="similarity">
    <text evidence="3">Belongs to the aquareoviridae NS1 protein family.</text>
</comment>
<accession>B2BNE2</accession>
<feature type="chain" id="PRO_0000404175" description="Non-structural protein 1">
    <location>
        <begin position="1"/>
        <end position="735"/>
    </location>
</feature>
<feature type="region of interest" description="Disordered" evidence="2">
    <location>
        <begin position="18"/>
        <end position="50"/>
    </location>
</feature>
<feature type="region of interest" description="Disordered" evidence="2">
    <location>
        <begin position="138"/>
        <end position="170"/>
    </location>
</feature>
<feature type="region of interest" description="Disordered" evidence="2">
    <location>
        <begin position="218"/>
        <end position="290"/>
    </location>
</feature>
<feature type="compositionally biased region" description="Low complexity" evidence="2">
    <location>
        <begin position="38"/>
        <end position="47"/>
    </location>
</feature>
<feature type="compositionally biased region" description="Low complexity" evidence="2">
    <location>
        <begin position="218"/>
        <end position="234"/>
    </location>
</feature>
<feature type="compositionally biased region" description="Polar residues" evidence="2">
    <location>
        <begin position="235"/>
        <end position="247"/>
    </location>
</feature>
<feature type="compositionally biased region" description="Basic and acidic residues" evidence="2">
    <location>
        <begin position="254"/>
        <end position="274"/>
    </location>
</feature>
<keyword id="KW-1185">Reference proteome</keyword>
<keyword id="KW-0694">RNA-binding</keyword>